<sequence length="388" mass="41858">MSQPRTVTVLGATGSIGHSTLDLIERNLDRYQVIALTANRNVKDLADAAKRTNAKRAVIADPSLYNDLKEALAGSSVEAAAGADALVEAAMMGADWTMAAIIGCAGLKATLAAIRKGKTVALANKESLVSAGGLMIDAVREHGTTLLPVDSEHNAIFQCFPHHNRDYVRRIIITASGGPFRTTSLAEMATVTPERAVQHPNWSMGAKISIDSATMMNKGLELIEAYHLFQIPLEKFEILVHPQSVIHSMVEYLDGSILAQIGSPDMRTPIGHTLAWPKRMETPAESLDFTKLRQMDFEAPDYERFPALTLAMESIKSGGARPAVMNAANEIAVAAFLDKKIGFLDIAKIVEKTLDHYTPATPSSLEDVFAIDNEARIQAAALMESLPA</sequence>
<feature type="chain" id="PRO_0000163747" description="1-deoxy-D-xylulose 5-phosphate reductoisomerase">
    <location>
        <begin position="1"/>
        <end position="388"/>
    </location>
</feature>
<feature type="binding site" evidence="1">
    <location>
        <position position="13"/>
    </location>
    <ligand>
        <name>NADPH</name>
        <dbReference type="ChEBI" id="CHEBI:57783"/>
    </ligand>
</feature>
<feature type="binding site" evidence="1">
    <location>
        <position position="14"/>
    </location>
    <ligand>
        <name>NADPH</name>
        <dbReference type="ChEBI" id="CHEBI:57783"/>
    </ligand>
</feature>
<feature type="binding site" evidence="1">
    <location>
        <position position="15"/>
    </location>
    <ligand>
        <name>NADPH</name>
        <dbReference type="ChEBI" id="CHEBI:57783"/>
    </ligand>
</feature>
<feature type="binding site" evidence="1">
    <location>
        <position position="16"/>
    </location>
    <ligand>
        <name>NADPH</name>
        <dbReference type="ChEBI" id="CHEBI:57783"/>
    </ligand>
</feature>
<feature type="binding site" evidence="1">
    <location>
        <position position="40"/>
    </location>
    <ligand>
        <name>NADPH</name>
        <dbReference type="ChEBI" id="CHEBI:57783"/>
    </ligand>
</feature>
<feature type="binding site" evidence="1">
    <location>
        <position position="41"/>
    </location>
    <ligand>
        <name>NADPH</name>
        <dbReference type="ChEBI" id="CHEBI:57783"/>
    </ligand>
</feature>
<feature type="binding site" evidence="1">
    <location>
        <position position="124"/>
    </location>
    <ligand>
        <name>NADPH</name>
        <dbReference type="ChEBI" id="CHEBI:57783"/>
    </ligand>
</feature>
<feature type="binding site" evidence="1">
    <location>
        <position position="125"/>
    </location>
    <ligand>
        <name>1-deoxy-D-xylulose 5-phosphate</name>
        <dbReference type="ChEBI" id="CHEBI:57792"/>
    </ligand>
</feature>
<feature type="binding site" evidence="1">
    <location>
        <position position="126"/>
    </location>
    <ligand>
        <name>NADPH</name>
        <dbReference type="ChEBI" id="CHEBI:57783"/>
    </ligand>
</feature>
<feature type="binding site" evidence="1">
    <location>
        <position position="150"/>
    </location>
    <ligand>
        <name>Mn(2+)</name>
        <dbReference type="ChEBI" id="CHEBI:29035"/>
    </ligand>
</feature>
<feature type="binding site" evidence="1">
    <location>
        <position position="151"/>
    </location>
    <ligand>
        <name>1-deoxy-D-xylulose 5-phosphate</name>
        <dbReference type="ChEBI" id="CHEBI:57792"/>
    </ligand>
</feature>
<feature type="binding site" evidence="1">
    <location>
        <position position="152"/>
    </location>
    <ligand>
        <name>1-deoxy-D-xylulose 5-phosphate</name>
        <dbReference type="ChEBI" id="CHEBI:57792"/>
    </ligand>
</feature>
<feature type="binding site" evidence="1">
    <location>
        <position position="152"/>
    </location>
    <ligand>
        <name>Mn(2+)</name>
        <dbReference type="ChEBI" id="CHEBI:29035"/>
    </ligand>
</feature>
<feature type="binding site" evidence="1">
    <location>
        <position position="176"/>
    </location>
    <ligand>
        <name>1-deoxy-D-xylulose 5-phosphate</name>
        <dbReference type="ChEBI" id="CHEBI:57792"/>
    </ligand>
</feature>
<feature type="binding site" evidence="1">
    <location>
        <position position="199"/>
    </location>
    <ligand>
        <name>1-deoxy-D-xylulose 5-phosphate</name>
        <dbReference type="ChEBI" id="CHEBI:57792"/>
    </ligand>
</feature>
<feature type="binding site" evidence="1">
    <location>
        <position position="205"/>
    </location>
    <ligand>
        <name>NADPH</name>
        <dbReference type="ChEBI" id="CHEBI:57783"/>
    </ligand>
</feature>
<feature type="binding site" evidence="1">
    <location>
        <position position="212"/>
    </location>
    <ligand>
        <name>1-deoxy-D-xylulose 5-phosphate</name>
        <dbReference type="ChEBI" id="CHEBI:57792"/>
    </ligand>
</feature>
<feature type="binding site" evidence="1">
    <location>
        <position position="217"/>
    </location>
    <ligand>
        <name>1-deoxy-D-xylulose 5-phosphate</name>
        <dbReference type="ChEBI" id="CHEBI:57792"/>
    </ligand>
</feature>
<feature type="binding site" evidence="1">
    <location>
        <position position="218"/>
    </location>
    <ligand>
        <name>1-deoxy-D-xylulose 5-phosphate</name>
        <dbReference type="ChEBI" id="CHEBI:57792"/>
    </ligand>
</feature>
<feature type="binding site" evidence="1">
    <location>
        <position position="221"/>
    </location>
    <ligand>
        <name>1-deoxy-D-xylulose 5-phosphate</name>
        <dbReference type="ChEBI" id="CHEBI:57792"/>
    </ligand>
</feature>
<feature type="binding site" evidence="1">
    <location>
        <position position="221"/>
    </location>
    <ligand>
        <name>Mn(2+)</name>
        <dbReference type="ChEBI" id="CHEBI:29035"/>
    </ligand>
</feature>
<feature type="sequence conflict" description="In Ref. 1; CAB60758." evidence="4" ref="1">
    <original>Y</original>
    <variation>F</variation>
    <location>
        <position position="226"/>
    </location>
</feature>
<feature type="strand" evidence="6">
    <location>
        <begin position="5"/>
        <end position="11"/>
    </location>
</feature>
<feature type="helix" evidence="6">
    <location>
        <begin position="15"/>
        <end position="26"/>
    </location>
</feature>
<feature type="helix" evidence="6">
    <location>
        <begin position="27"/>
        <end position="30"/>
    </location>
</feature>
<feature type="strand" evidence="6">
    <location>
        <begin position="31"/>
        <end position="40"/>
    </location>
</feature>
<feature type="helix" evidence="6">
    <location>
        <begin position="42"/>
        <end position="51"/>
    </location>
</feature>
<feature type="strand" evidence="6">
    <location>
        <begin position="55"/>
        <end position="60"/>
    </location>
</feature>
<feature type="helix" evidence="6">
    <location>
        <begin position="62"/>
        <end position="64"/>
    </location>
</feature>
<feature type="helix" evidence="6">
    <location>
        <begin position="65"/>
        <end position="71"/>
    </location>
</feature>
<feature type="turn" evidence="6">
    <location>
        <begin position="72"/>
        <end position="74"/>
    </location>
</feature>
<feature type="strand" evidence="6">
    <location>
        <begin position="76"/>
        <end position="82"/>
    </location>
</feature>
<feature type="helix" evidence="6">
    <location>
        <begin position="83"/>
        <end position="90"/>
    </location>
</feature>
<feature type="strand" evidence="6">
    <location>
        <begin position="95"/>
        <end position="99"/>
    </location>
</feature>
<feature type="helix" evidence="6">
    <location>
        <begin position="104"/>
        <end position="106"/>
    </location>
</feature>
<feature type="helix" evidence="6">
    <location>
        <begin position="107"/>
        <end position="115"/>
    </location>
</feature>
<feature type="strand" evidence="6">
    <location>
        <begin position="118"/>
        <end position="122"/>
    </location>
</feature>
<feature type="helix" evidence="6">
    <location>
        <begin position="126"/>
        <end position="129"/>
    </location>
</feature>
<feature type="helix" evidence="6">
    <location>
        <begin position="132"/>
        <end position="142"/>
    </location>
</feature>
<feature type="strand" evidence="6">
    <location>
        <begin position="145"/>
        <end position="148"/>
    </location>
</feature>
<feature type="helix" evidence="6">
    <location>
        <begin position="151"/>
        <end position="159"/>
    </location>
</feature>
<feature type="helix" evidence="6">
    <location>
        <begin position="165"/>
        <end position="167"/>
    </location>
</feature>
<feature type="strand" evidence="6">
    <location>
        <begin position="168"/>
        <end position="175"/>
    </location>
</feature>
<feature type="turn" evidence="6">
    <location>
        <begin position="179"/>
        <end position="182"/>
    </location>
</feature>
<feature type="helix" evidence="6">
    <location>
        <begin position="185"/>
        <end position="188"/>
    </location>
</feature>
<feature type="helix" evidence="6">
    <location>
        <begin position="193"/>
        <end position="197"/>
    </location>
</feature>
<feature type="helix" evidence="6">
    <location>
        <begin position="206"/>
        <end position="213"/>
    </location>
</feature>
<feature type="helix" evidence="6">
    <location>
        <begin position="216"/>
        <end position="229"/>
    </location>
</feature>
<feature type="helix" evidence="6">
    <location>
        <begin position="233"/>
        <end position="235"/>
    </location>
</feature>
<feature type="strand" evidence="6">
    <location>
        <begin position="236"/>
        <end position="240"/>
    </location>
</feature>
<feature type="strand" evidence="6">
    <location>
        <begin position="246"/>
        <end position="252"/>
    </location>
</feature>
<feature type="strand" evidence="6">
    <location>
        <begin position="257"/>
        <end position="261"/>
    </location>
</feature>
<feature type="helix" evidence="6">
    <location>
        <begin position="267"/>
        <end position="275"/>
    </location>
</feature>
<feature type="helix" evidence="6">
    <location>
        <begin position="289"/>
        <end position="292"/>
    </location>
</feature>
<feature type="strand" evidence="6">
    <location>
        <begin position="294"/>
        <end position="296"/>
    </location>
</feature>
<feature type="turn" evidence="6">
    <location>
        <begin position="302"/>
        <end position="304"/>
    </location>
</feature>
<feature type="helix" evidence="6">
    <location>
        <begin position="306"/>
        <end position="317"/>
    </location>
</feature>
<feature type="helix" evidence="6">
    <location>
        <begin position="321"/>
        <end position="337"/>
    </location>
</feature>
<feature type="helix" evidence="6">
    <location>
        <begin position="345"/>
        <end position="356"/>
    </location>
</feature>
<feature type="helix" evidence="6">
    <location>
        <begin position="365"/>
        <end position="384"/>
    </location>
</feature>
<gene>
    <name evidence="1 3" type="primary">dxr</name>
    <name type="ordered locus">ZMO1150</name>
</gene>
<protein>
    <recommendedName>
        <fullName evidence="1 3">1-deoxy-D-xylulose 5-phosphate reductoisomerase</fullName>
        <shortName evidence="1 3">DXP reductoisomerase</shortName>
        <ecNumber evidence="2">1.1.1.267</ecNumber>
    </recommendedName>
    <alternativeName>
        <fullName evidence="1">1-deoxyxylulose-5-phosphate reductoisomerase</fullName>
    </alternativeName>
    <alternativeName>
        <fullName evidence="1">2-C-methyl-D-erythritol 4-phosphate synthase</fullName>
    </alternativeName>
</protein>
<keyword id="KW-0002">3D-structure</keyword>
<keyword id="KW-0170">Cobalt</keyword>
<keyword id="KW-0414">Isoprene biosynthesis</keyword>
<keyword id="KW-0460">Magnesium</keyword>
<keyword id="KW-0464">Manganese</keyword>
<keyword id="KW-0479">Metal-binding</keyword>
<keyword id="KW-0521">NADP</keyword>
<keyword id="KW-0560">Oxidoreductase</keyword>
<keyword id="KW-1185">Reference proteome</keyword>
<comment type="function">
    <text evidence="2">Catalyzes the NADPH-dependent rearrangement and reduction of 1-deoxy-D-xylulose-5-phosphate (DXP) to 2-C-methyl-D-erythritol 4-phosphate (MEP). Cannot use NADH instead of NADPH as the reducing agent.</text>
</comment>
<comment type="catalytic activity">
    <reaction evidence="2">
        <text>2-C-methyl-D-erythritol 4-phosphate + NADP(+) = 1-deoxy-D-xylulose 5-phosphate + NADPH + H(+)</text>
        <dbReference type="Rhea" id="RHEA:13717"/>
        <dbReference type="ChEBI" id="CHEBI:15378"/>
        <dbReference type="ChEBI" id="CHEBI:57783"/>
        <dbReference type="ChEBI" id="CHEBI:57792"/>
        <dbReference type="ChEBI" id="CHEBI:58262"/>
        <dbReference type="ChEBI" id="CHEBI:58349"/>
        <dbReference type="EC" id="1.1.1.267"/>
    </reaction>
    <physiologicalReaction direction="right-to-left" evidence="5">
        <dbReference type="Rhea" id="RHEA:13719"/>
    </physiologicalReaction>
</comment>
<comment type="cofactor">
    <cofactor evidence="2">
        <name>Mg(2+)</name>
        <dbReference type="ChEBI" id="CHEBI:18420"/>
    </cofactor>
    <cofactor evidence="2">
        <name>Mn(2+)</name>
        <dbReference type="ChEBI" id="CHEBI:29035"/>
    </cofactor>
    <cofactor evidence="2">
        <name>Co(2+)</name>
        <dbReference type="ChEBI" id="CHEBI:48828"/>
    </cofactor>
    <text evidence="2">Requires divalent metal cations for activity. Prefers Mg(2+), Mn(2+) or Co(2+). Is inactive with Zn(2+), Ni(2+) and Fe(2+).</text>
</comment>
<comment type="activity regulation">
    <text evidence="2">Competitively inhibited by the antibiotic fosmidomycin.</text>
</comment>
<comment type="biophysicochemical properties">
    <kinetics>
        <KM evidence="2">0.3 mM for 1-deoxy-D-xylulose 5-phosphate</KM>
        <KM evidence="2">5 uM for NADPH</KM>
        <Vmax evidence="2">19.5 umol/min/mg enzyme</Vmax>
    </kinetics>
    <phDependence>
        <text>Optimum pH is 7-8.</text>
    </phDependence>
    <temperatureDependence>
        <text>Optimum temperature is 50-60 degrees Celsius.</text>
    </temperatureDependence>
</comment>
<comment type="pathway">
    <text evidence="1 5">Isoprenoid biosynthesis; isopentenyl diphosphate biosynthesis via DXP pathway; isopentenyl diphosphate from 1-deoxy-D-xylulose 5-phosphate: step 1/6.</text>
</comment>
<comment type="subunit">
    <text evidence="2">Homodimer.</text>
</comment>
<comment type="similarity">
    <text evidence="1">Belongs to the DXR family.</text>
</comment>
<proteinExistence type="evidence at protein level"/>
<accession>Q9X5F2</accession>
<accession>Q5NND6</accession>
<accession>Q9RIA9</accession>
<dbReference type="EC" id="1.1.1.267" evidence="2"/>
<dbReference type="EMBL" id="AJ250714">
    <property type="protein sequence ID" value="CAB60758.1"/>
    <property type="molecule type" value="Genomic_DNA"/>
</dbReference>
<dbReference type="EMBL" id="AF124757">
    <property type="protein sequence ID" value="AAD29659.1"/>
    <property type="molecule type" value="Genomic_DNA"/>
</dbReference>
<dbReference type="EMBL" id="AE008692">
    <property type="protein sequence ID" value="AAV89774.1"/>
    <property type="molecule type" value="Genomic_DNA"/>
</dbReference>
<dbReference type="RefSeq" id="WP_011240977.1">
    <property type="nucleotide sequence ID" value="NZ_CP035711.1"/>
</dbReference>
<dbReference type="PDB" id="1R0K">
    <property type="method" value="X-ray"/>
    <property type="resolution" value="1.91 A"/>
    <property type="chains" value="A/B/C/D=1-388"/>
</dbReference>
<dbReference type="PDB" id="1R0L">
    <property type="method" value="X-ray"/>
    <property type="resolution" value="2.70 A"/>
    <property type="chains" value="A/B/C/D=1-388"/>
</dbReference>
<dbReference type="PDBsum" id="1R0K"/>
<dbReference type="PDBsum" id="1R0L"/>
<dbReference type="SMR" id="Q9X5F2"/>
<dbReference type="STRING" id="264203.ZMO1150"/>
<dbReference type="KEGG" id="zmo:ZMO1150"/>
<dbReference type="eggNOG" id="COG0743">
    <property type="taxonomic scope" value="Bacteria"/>
</dbReference>
<dbReference type="HOGENOM" id="CLU_035714_4_0_5"/>
<dbReference type="UniPathway" id="UPA00056">
    <property type="reaction ID" value="UER00092"/>
</dbReference>
<dbReference type="EvolutionaryTrace" id="Q9X5F2"/>
<dbReference type="Proteomes" id="UP000001173">
    <property type="component" value="Chromosome"/>
</dbReference>
<dbReference type="GO" id="GO:0030604">
    <property type="term" value="F:1-deoxy-D-xylulose-5-phosphate reductoisomerase activity"/>
    <property type="evidence" value="ECO:0007669"/>
    <property type="project" value="UniProtKB-UniRule"/>
</dbReference>
<dbReference type="GO" id="GO:0030145">
    <property type="term" value="F:manganese ion binding"/>
    <property type="evidence" value="ECO:0007669"/>
    <property type="project" value="TreeGrafter"/>
</dbReference>
<dbReference type="GO" id="GO:0070402">
    <property type="term" value="F:NADPH binding"/>
    <property type="evidence" value="ECO:0007669"/>
    <property type="project" value="InterPro"/>
</dbReference>
<dbReference type="GO" id="GO:0051484">
    <property type="term" value="P:isopentenyl diphosphate biosynthetic process, methylerythritol 4-phosphate pathway involved in terpenoid biosynthetic process"/>
    <property type="evidence" value="ECO:0007669"/>
    <property type="project" value="TreeGrafter"/>
</dbReference>
<dbReference type="FunFam" id="1.10.1740.10:FF:000004">
    <property type="entry name" value="1-deoxy-D-xylulose 5-phosphate reductoisomerase"/>
    <property type="match status" value="1"/>
</dbReference>
<dbReference type="FunFam" id="3.40.50.720:FF:000045">
    <property type="entry name" value="1-deoxy-D-xylulose 5-phosphate reductoisomerase"/>
    <property type="match status" value="1"/>
</dbReference>
<dbReference type="Gene3D" id="1.10.1740.10">
    <property type="match status" value="1"/>
</dbReference>
<dbReference type="Gene3D" id="3.40.50.720">
    <property type="entry name" value="NAD(P)-binding Rossmann-like Domain"/>
    <property type="match status" value="1"/>
</dbReference>
<dbReference type="HAMAP" id="MF_00183">
    <property type="entry name" value="DXP_reductoisom"/>
    <property type="match status" value="1"/>
</dbReference>
<dbReference type="InterPro" id="IPR003821">
    <property type="entry name" value="DXP_reductoisomerase"/>
</dbReference>
<dbReference type="InterPro" id="IPR013644">
    <property type="entry name" value="DXP_reductoisomerase_C"/>
</dbReference>
<dbReference type="InterPro" id="IPR013512">
    <property type="entry name" value="DXP_reductoisomerase_N"/>
</dbReference>
<dbReference type="InterPro" id="IPR026877">
    <property type="entry name" value="DXPR_C"/>
</dbReference>
<dbReference type="InterPro" id="IPR036169">
    <property type="entry name" value="DXPR_C_sf"/>
</dbReference>
<dbReference type="InterPro" id="IPR036291">
    <property type="entry name" value="NAD(P)-bd_dom_sf"/>
</dbReference>
<dbReference type="NCBIfam" id="TIGR00243">
    <property type="entry name" value="Dxr"/>
    <property type="match status" value="1"/>
</dbReference>
<dbReference type="NCBIfam" id="NF009114">
    <property type="entry name" value="PRK12464.1"/>
    <property type="match status" value="1"/>
</dbReference>
<dbReference type="PANTHER" id="PTHR30525">
    <property type="entry name" value="1-DEOXY-D-XYLULOSE 5-PHOSPHATE REDUCTOISOMERASE"/>
    <property type="match status" value="1"/>
</dbReference>
<dbReference type="PANTHER" id="PTHR30525:SF0">
    <property type="entry name" value="1-DEOXY-D-XYLULOSE 5-PHOSPHATE REDUCTOISOMERASE, CHLOROPLASTIC"/>
    <property type="match status" value="1"/>
</dbReference>
<dbReference type="Pfam" id="PF08436">
    <property type="entry name" value="DXP_redisom_C"/>
    <property type="match status" value="1"/>
</dbReference>
<dbReference type="Pfam" id="PF02670">
    <property type="entry name" value="DXP_reductoisom"/>
    <property type="match status" value="1"/>
</dbReference>
<dbReference type="Pfam" id="PF13288">
    <property type="entry name" value="DXPR_C"/>
    <property type="match status" value="1"/>
</dbReference>
<dbReference type="PIRSF" id="PIRSF006205">
    <property type="entry name" value="Dxp_reductismrs"/>
    <property type="match status" value="1"/>
</dbReference>
<dbReference type="SUPFAM" id="SSF69055">
    <property type="entry name" value="1-deoxy-D-xylulose-5-phosphate reductoisomerase, C-terminal domain"/>
    <property type="match status" value="1"/>
</dbReference>
<dbReference type="SUPFAM" id="SSF55347">
    <property type="entry name" value="Glyceraldehyde-3-phosphate dehydrogenase-like, C-terminal domain"/>
    <property type="match status" value="1"/>
</dbReference>
<dbReference type="SUPFAM" id="SSF51735">
    <property type="entry name" value="NAD(P)-binding Rossmann-fold domains"/>
    <property type="match status" value="1"/>
</dbReference>
<evidence type="ECO:0000255" key="1">
    <source>
        <dbReference type="HAMAP-Rule" id="MF_00183"/>
    </source>
</evidence>
<evidence type="ECO:0000269" key="2">
    <source>
    </source>
</evidence>
<evidence type="ECO:0000303" key="3">
    <source>
    </source>
</evidence>
<evidence type="ECO:0000305" key="4"/>
<evidence type="ECO:0000305" key="5">
    <source>
    </source>
</evidence>
<evidence type="ECO:0007829" key="6">
    <source>
        <dbReference type="PDB" id="1R0K"/>
    </source>
</evidence>
<organism>
    <name type="scientific">Zymomonas mobilis subsp. mobilis (strain ATCC 31821 / ZM4 / CP4)</name>
    <dbReference type="NCBI Taxonomy" id="264203"/>
    <lineage>
        <taxon>Bacteria</taxon>
        <taxon>Pseudomonadati</taxon>
        <taxon>Pseudomonadota</taxon>
        <taxon>Alphaproteobacteria</taxon>
        <taxon>Sphingomonadales</taxon>
        <taxon>Zymomonadaceae</taxon>
        <taxon>Zymomonas</taxon>
    </lineage>
</organism>
<name>DXR_ZYMMO</name>
<reference key="1">
    <citation type="journal article" date="2000" name="FEMS Microbiol. Lett.">
        <title>Isolation of the dxr gene of Zymomonas mobilis and characterization of the 1-deoxy-D-xylulose 5-phosphate reductoisomerase.</title>
        <authorList>
            <person name="Grolle S."/>
            <person name="Bringer-Meyer S."/>
            <person name="Sahm H."/>
        </authorList>
    </citation>
    <scope>NUCLEOTIDE SEQUENCE [GENOMIC DNA]</scope>
    <scope>FUNCTION</scope>
    <scope>CATALYTIC ACTIVITY</scope>
    <scope>COFACTOR</scope>
    <scope>BIOPHYSICOCHEMICAL PROPERTIES</scope>
    <scope>PATHWAY</scope>
    <scope>SUBUNIT</scope>
    <scope>ACTIVITY REGULATION</scope>
    <source>
        <strain>ATCC 31821 / ZM4 / CP4</strain>
    </source>
</reference>
<reference key="2">
    <citation type="submission" date="1999-01" db="EMBL/GenBank/DDBJ databases">
        <authorList>
            <person name="Lee H.J."/>
            <person name="Kang H.S."/>
        </authorList>
    </citation>
    <scope>NUCLEOTIDE SEQUENCE [GENOMIC DNA]</scope>
    <source>
        <strain>ATCC 31821 / ZM4 / CP4</strain>
    </source>
</reference>
<reference key="3">
    <citation type="journal article" date="2005" name="Nat. Biotechnol.">
        <title>The genome sequence of the ethanologenic bacterium Zymomonas mobilis ZM4.</title>
        <authorList>
            <person name="Seo J.-S."/>
            <person name="Chong H."/>
            <person name="Park H.S."/>
            <person name="Yoon K.-O."/>
            <person name="Jung C."/>
            <person name="Kim J.J."/>
            <person name="Hong J.H."/>
            <person name="Kim H."/>
            <person name="Kim J.-H."/>
            <person name="Kil J.-I."/>
            <person name="Park C.J."/>
            <person name="Oh H.-M."/>
            <person name="Lee J.-S."/>
            <person name="Jin S.-J."/>
            <person name="Um H.-W."/>
            <person name="Lee H.-J."/>
            <person name="Oh S.-J."/>
            <person name="Kim J.Y."/>
            <person name="Kang H.L."/>
            <person name="Lee S.Y."/>
            <person name="Lee K.J."/>
            <person name="Kang H.S."/>
        </authorList>
    </citation>
    <scope>NUCLEOTIDE SEQUENCE [LARGE SCALE GENOMIC DNA]</scope>
    <source>
        <strain>ATCC 31821 / ZM4 / CP4</strain>
    </source>
</reference>